<keyword id="KW-0027">Amidation</keyword>
<keyword id="KW-0878">Amphibian defense peptide</keyword>
<keyword id="KW-0903">Direct protein sequencing</keyword>
<keyword id="KW-0964">Secreted</keyword>
<sequence>NEEEKVKWEPDVP</sequence>
<evidence type="ECO:0000269" key="1">
    <source ref="1"/>
</evidence>
<reference key="1">
    <citation type="journal article" date="1999" name="Aust. J. Chem.">
        <title>Peptides from the skin glands of the Australian buzzing tree frog Litori electrica. Comparison with the skin peptides from Litoria rubella.</title>
        <authorList>
            <person name="Wabnitz P.A."/>
            <person name="Bowie J.H."/>
            <person name="Tyler M.J."/>
            <person name="Wallace J.C."/>
        </authorList>
    </citation>
    <scope>PROTEIN SEQUENCE</scope>
    <scope>AMIDATION AT PRO-13</scope>
    <source>
        <tissue>Skin secretion</tissue>
    </source>
</reference>
<protein>
    <recommendedName>
        <fullName>Electrin-2.1</fullName>
    </recommendedName>
</protein>
<comment type="subcellular location">
    <subcellularLocation>
        <location>Secreted</location>
    </subcellularLocation>
</comment>
<comment type="tissue specificity">
    <text>Expressed by the skin glands.</text>
</comment>
<proteinExistence type="evidence at protein level"/>
<feature type="peptide" id="PRO_0000043792" description="Electrin-2.1">
    <location>
        <begin position="1"/>
        <end position="13"/>
    </location>
</feature>
<feature type="modified residue" description="Proline amide" evidence="1">
    <location>
        <position position="13"/>
    </location>
</feature>
<organism>
    <name type="scientific">Litoria rubella</name>
    <name type="common">Desert tree frog</name>
    <name type="synonym">Hyla rubella</name>
    <dbReference type="NCBI Taxonomy" id="104895"/>
    <lineage>
        <taxon>Eukaryota</taxon>
        <taxon>Metazoa</taxon>
        <taxon>Chordata</taxon>
        <taxon>Craniata</taxon>
        <taxon>Vertebrata</taxon>
        <taxon>Euteleostomi</taxon>
        <taxon>Amphibia</taxon>
        <taxon>Batrachia</taxon>
        <taxon>Anura</taxon>
        <taxon>Neobatrachia</taxon>
        <taxon>Hyloidea</taxon>
        <taxon>Hylidae</taxon>
        <taxon>Pelodryadinae</taxon>
        <taxon>Litoria</taxon>
    </lineage>
</organism>
<accession>P82097</accession>
<name>EI21_LITRU</name>
<dbReference type="GO" id="GO:0005576">
    <property type="term" value="C:extracellular region"/>
    <property type="evidence" value="ECO:0007669"/>
    <property type="project" value="UniProtKB-SubCell"/>
</dbReference>
<dbReference type="GO" id="GO:0006952">
    <property type="term" value="P:defense response"/>
    <property type="evidence" value="ECO:0007669"/>
    <property type="project" value="UniProtKB-KW"/>
</dbReference>